<keyword id="KW-0903">Direct protein sequencing</keyword>
<keyword id="KW-1015">Disulfide bond</keyword>
<keyword id="KW-0372">Hormone</keyword>
<keyword id="KW-0964">Secreted</keyword>
<keyword id="KW-0838">Vasoactive</keyword>
<protein>
    <recommendedName>
        <fullName>Natriuretic peptides A</fullName>
    </recommendedName>
    <component>
        <recommendedName>
            <fullName>Atrial natriuretic factor</fullName>
            <shortName>ANF</shortName>
        </recommendedName>
        <alternativeName>
            <fullName>Atrial natriuretic peptide</fullName>
            <shortName>ANP</shortName>
        </alternativeName>
    </component>
</protein>
<accession>P09196</accession>
<feature type="propeptide" id="PRO_0000391786">
    <location>
        <begin position="1"/>
        <end position="3"/>
    </location>
</feature>
<feature type="peptide" id="PRO_0000391787" description="Atrial natriuretic factor">
    <location>
        <begin position="4"/>
        <end position="30"/>
    </location>
</feature>
<feature type="site" description="Cleavage" evidence="1">
    <location>
        <begin position="3"/>
        <end position="4"/>
    </location>
</feature>
<feature type="disulfide bond">
    <location>
        <begin position="11"/>
        <end position="27"/>
    </location>
</feature>
<name>ANF_PELRI</name>
<organism>
    <name type="scientific">Pelophylax ridibundus</name>
    <name type="common">Marsh frog</name>
    <name type="synonym">Rana ridibunda</name>
    <dbReference type="NCBI Taxonomy" id="8406"/>
    <lineage>
        <taxon>Eukaryota</taxon>
        <taxon>Metazoa</taxon>
        <taxon>Chordata</taxon>
        <taxon>Craniata</taxon>
        <taxon>Vertebrata</taxon>
        <taxon>Euteleostomi</taxon>
        <taxon>Amphibia</taxon>
        <taxon>Batrachia</taxon>
        <taxon>Anura</taxon>
        <taxon>Neobatrachia</taxon>
        <taxon>Ranoidea</taxon>
        <taxon>Ranidae</taxon>
        <taxon>Pelophylax</taxon>
    </lineage>
</organism>
<proteinExistence type="evidence at protein level"/>
<dbReference type="PIR" id="S01657">
    <property type="entry name" value="S01657"/>
</dbReference>
<dbReference type="GO" id="GO:0005576">
    <property type="term" value="C:extracellular region"/>
    <property type="evidence" value="ECO:0007669"/>
    <property type="project" value="UniProtKB-SubCell"/>
</dbReference>
<dbReference type="GO" id="GO:0005179">
    <property type="term" value="F:hormone activity"/>
    <property type="evidence" value="ECO:0007669"/>
    <property type="project" value="UniProtKB-KW"/>
</dbReference>
<dbReference type="GO" id="GO:0097746">
    <property type="term" value="P:blood vessel diameter maintenance"/>
    <property type="evidence" value="ECO:0007669"/>
    <property type="project" value="UniProtKB-KW"/>
</dbReference>
<dbReference type="GO" id="GO:0006182">
    <property type="term" value="P:cGMP biosynthetic process"/>
    <property type="evidence" value="ECO:0000250"/>
    <property type="project" value="UniProtKB"/>
</dbReference>
<dbReference type="GO" id="GO:0007168">
    <property type="term" value="P:receptor guanylyl cyclase signaling pathway"/>
    <property type="evidence" value="ECO:0000250"/>
    <property type="project" value="UniProtKB"/>
</dbReference>
<dbReference type="InterPro" id="IPR000663">
    <property type="entry name" value="Natr_peptide"/>
</dbReference>
<dbReference type="InterPro" id="IPR030480">
    <property type="entry name" value="Natr_peptide_CS"/>
</dbReference>
<dbReference type="Pfam" id="PF00212">
    <property type="entry name" value="ANP"/>
    <property type="match status" value="1"/>
</dbReference>
<dbReference type="PRINTS" id="PR00710">
    <property type="entry name" value="NATPEPTIDES"/>
</dbReference>
<dbReference type="SMART" id="SM00183">
    <property type="entry name" value="NAT_PEP"/>
    <property type="match status" value="1"/>
</dbReference>
<dbReference type="PROSITE" id="PS00263">
    <property type="entry name" value="NATRIURETIC_PEPTIDE"/>
    <property type="match status" value="1"/>
</dbReference>
<sequence length="30" mass="3263">APRSMRRSSDCFGSRIDRIGAQSGMGCGRF</sequence>
<evidence type="ECO:0000250" key="1"/>
<evidence type="ECO:0000305" key="2"/>
<reference key="1">
    <citation type="journal article" date="1988" name="FEBS Lett.">
        <title>The amino acid sequences of frog heart atrial natriuretic-like peptide and mammalian ANF are closely related.</title>
        <authorList>
            <person name="Lazure C."/>
            <person name="Ong H."/>
            <person name="McNicoll N."/>
            <person name="Netchitailo P."/>
            <person name="Chretien M."/>
            <person name="de Lean A."/>
            <person name="Vaudry H."/>
        </authorList>
    </citation>
    <scope>PROTEIN SEQUENCE</scope>
    <source>
        <tissue>Heart atrium</tissue>
    </source>
</reference>
<comment type="function">
    <text evidence="1">Hormone playing a key role in cardiovascular homeostasis through regulation of natriuresis, diuresis, and vasodilation. Has a cGMP-stimulating activity (By similarity).</text>
</comment>
<comment type="subcellular location">
    <subcellularLocation>
        <location>Secreted</location>
    </subcellularLocation>
</comment>
<comment type="PTM">
    <text evidence="1">Cleaved upon secretion to produce the functional hormone.</text>
</comment>
<comment type="similarity">
    <text evidence="2">Belongs to the natriuretic peptide family.</text>
</comment>